<comment type="function">
    <text evidence="1">This protein binds specifically to 23S rRNA. It makes multiple contacts with different domains of the 23S rRNA in the assembled 50S subunit and ribosome.</text>
</comment>
<comment type="function">
    <text evidence="1">The globular domain of the protein is located near the polypeptide exit tunnel on the outside of the subunit, while an extended beta-hairpin is found that lines the wall of the exit tunnel in the center of the 70S ribosome.</text>
</comment>
<comment type="subunit">
    <text evidence="1">Part of the 50S ribosomal subunit.</text>
</comment>
<comment type="similarity">
    <text evidence="1">Belongs to the universal ribosomal protein uL22 family.</text>
</comment>
<reference key="1">
    <citation type="journal article" date="2006" name="J. Bacteriol.">
        <title>The genome sequence of Methanosphaera stadtmanae reveals why this human intestinal archaeon is restricted to methanol and H2 for methane formation and ATP synthesis.</title>
        <authorList>
            <person name="Fricke W.F."/>
            <person name="Seedorf H."/>
            <person name="Henne A."/>
            <person name="Kruer M."/>
            <person name="Liesegang H."/>
            <person name="Hedderich R."/>
            <person name="Gottschalk G."/>
            <person name="Thauer R.K."/>
        </authorList>
    </citation>
    <scope>NUCLEOTIDE SEQUENCE [LARGE SCALE GENOMIC DNA]</scope>
    <source>
        <strain>ATCC 43021 / DSM 3091 / JCM 11832 / MCB-3</strain>
    </source>
</reference>
<sequence length="154" mass="17081">MAKKNTYSYQPKADEKIAKAAGHSLKISPKHSVEICRTIRNMYLEDAKAFLEDVIAKKTVVPFKRHNKKVGHRSDLKGWPSGRYPVKAAAAILKVLENAEANAENEELDVENLKLVHVCANRGVIIRGWTPRAFGRASPSNTPTTHIQIVLGEA</sequence>
<gene>
    <name evidence="1" type="primary">rpl22</name>
    <name type="ordered locus">Msp_0904</name>
</gene>
<dbReference type="EMBL" id="CP000102">
    <property type="protein sequence ID" value="ABC57292.1"/>
    <property type="molecule type" value="Genomic_DNA"/>
</dbReference>
<dbReference type="RefSeq" id="WP_011406491.1">
    <property type="nucleotide sequence ID" value="NC_007681.1"/>
</dbReference>
<dbReference type="SMR" id="Q2NFW1"/>
<dbReference type="STRING" id="339860.Msp_0904"/>
<dbReference type="KEGG" id="mst:Msp_0904"/>
<dbReference type="eggNOG" id="arCOG04098">
    <property type="taxonomic scope" value="Archaea"/>
</dbReference>
<dbReference type="HOGENOM" id="CLU_083987_0_2_2"/>
<dbReference type="OrthoDB" id="314984at2157"/>
<dbReference type="Proteomes" id="UP000001931">
    <property type="component" value="Chromosome"/>
</dbReference>
<dbReference type="GO" id="GO:0022625">
    <property type="term" value="C:cytosolic large ribosomal subunit"/>
    <property type="evidence" value="ECO:0007669"/>
    <property type="project" value="TreeGrafter"/>
</dbReference>
<dbReference type="GO" id="GO:0019843">
    <property type="term" value="F:rRNA binding"/>
    <property type="evidence" value="ECO:0007669"/>
    <property type="project" value="UniProtKB-UniRule"/>
</dbReference>
<dbReference type="GO" id="GO:0003735">
    <property type="term" value="F:structural constituent of ribosome"/>
    <property type="evidence" value="ECO:0007669"/>
    <property type="project" value="InterPro"/>
</dbReference>
<dbReference type="GO" id="GO:0002181">
    <property type="term" value="P:cytoplasmic translation"/>
    <property type="evidence" value="ECO:0007669"/>
    <property type="project" value="TreeGrafter"/>
</dbReference>
<dbReference type="CDD" id="cd00336">
    <property type="entry name" value="Ribosomal_L22"/>
    <property type="match status" value="1"/>
</dbReference>
<dbReference type="Gene3D" id="3.90.470.10">
    <property type="entry name" value="Ribosomal protein L22/L17"/>
    <property type="match status" value="1"/>
</dbReference>
<dbReference type="HAMAP" id="MF_01331_A">
    <property type="entry name" value="Ribosomal_uL22_A"/>
    <property type="match status" value="1"/>
</dbReference>
<dbReference type="InterPro" id="IPR001063">
    <property type="entry name" value="Ribosomal_uL22"/>
</dbReference>
<dbReference type="InterPro" id="IPR018260">
    <property type="entry name" value="Ribosomal_uL22_CS"/>
</dbReference>
<dbReference type="InterPro" id="IPR005721">
    <property type="entry name" value="Ribosomal_uL22_euk/arc"/>
</dbReference>
<dbReference type="InterPro" id="IPR036394">
    <property type="entry name" value="Ribosomal_uL22_sf"/>
</dbReference>
<dbReference type="NCBIfam" id="NF003260">
    <property type="entry name" value="PRK04223.1"/>
    <property type="match status" value="1"/>
</dbReference>
<dbReference type="NCBIfam" id="TIGR01038">
    <property type="entry name" value="uL22_arch_euk"/>
    <property type="match status" value="1"/>
</dbReference>
<dbReference type="PANTHER" id="PTHR11593">
    <property type="entry name" value="60S RIBOSOMAL PROTEIN L17"/>
    <property type="match status" value="1"/>
</dbReference>
<dbReference type="PANTHER" id="PTHR11593:SF10">
    <property type="entry name" value="60S RIBOSOMAL PROTEIN L17"/>
    <property type="match status" value="1"/>
</dbReference>
<dbReference type="Pfam" id="PF00237">
    <property type="entry name" value="Ribosomal_L22"/>
    <property type="match status" value="1"/>
</dbReference>
<dbReference type="SUPFAM" id="SSF54843">
    <property type="entry name" value="Ribosomal protein L22"/>
    <property type="match status" value="1"/>
</dbReference>
<dbReference type="PROSITE" id="PS00464">
    <property type="entry name" value="RIBOSOMAL_L22"/>
    <property type="match status" value="1"/>
</dbReference>
<evidence type="ECO:0000255" key="1">
    <source>
        <dbReference type="HAMAP-Rule" id="MF_01331"/>
    </source>
</evidence>
<evidence type="ECO:0000305" key="2"/>
<proteinExistence type="inferred from homology"/>
<keyword id="KW-1185">Reference proteome</keyword>
<keyword id="KW-0687">Ribonucleoprotein</keyword>
<keyword id="KW-0689">Ribosomal protein</keyword>
<keyword id="KW-0694">RNA-binding</keyword>
<keyword id="KW-0699">rRNA-binding</keyword>
<accession>Q2NFW1</accession>
<name>RL22_METST</name>
<feature type="chain" id="PRO_0000243249" description="Large ribosomal subunit protein uL22">
    <location>
        <begin position="1"/>
        <end position="154"/>
    </location>
</feature>
<protein>
    <recommendedName>
        <fullName evidence="1">Large ribosomal subunit protein uL22</fullName>
    </recommendedName>
    <alternativeName>
        <fullName evidence="2">50S ribosomal protein L22</fullName>
    </alternativeName>
</protein>
<organism>
    <name type="scientific">Methanosphaera stadtmanae (strain ATCC 43021 / DSM 3091 / JCM 11832 / MCB-3)</name>
    <dbReference type="NCBI Taxonomy" id="339860"/>
    <lineage>
        <taxon>Archaea</taxon>
        <taxon>Methanobacteriati</taxon>
        <taxon>Methanobacteriota</taxon>
        <taxon>Methanomada group</taxon>
        <taxon>Methanobacteria</taxon>
        <taxon>Methanobacteriales</taxon>
        <taxon>Methanobacteriaceae</taxon>
        <taxon>Methanosphaera</taxon>
    </lineage>
</organism>